<evidence type="ECO:0000255" key="1">
    <source>
        <dbReference type="HAMAP-Rule" id="MF_00199"/>
    </source>
</evidence>
<organism>
    <name type="scientific">Aeromonas hydrophila subsp. hydrophila (strain ATCC 7966 / DSM 30187 / BCRC 13018 / CCUG 14551 / JCM 1027 / KCTC 2358 / NCIMB 9240 / NCTC 8049)</name>
    <dbReference type="NCBI Taxonomy" id="380703"/>
    <lineage>
        <taxon>Bacteria</taxon>
        <taxon>Pseudomonadati</taxon>
        <taxon>Pseudomonadota</taxon>
        <taxon>Gammaproteobacteria</taxon>
        <taxon>Aeromonadales</taxon>
        <taxon>Aeromonadaceae</taxon>
        <taxon>Aeromonas</taxon>
    </lineage>
</organism>
<name>APAH_AERHH</name>
<reference key="1">
    <citation type="journal article" date="2006" name="J. Bacteriol.">
        <title>Genome sequence of Aeromonas hydrophila ATCC 7966T: jack of all trades.</title>
        <authorList>
            <person name="Seshadri R."/>
            <person name="Joseph S.W."/>
            <person name="Chopra A.K."/>
            <person name="Sha J."/>
            <person name="Shaw J."/>
            <person name="Graf J."/>
            <person name="Haft D.H."/>
            <person name="Wu M."/>
            <person name="Ren Q."/>
            <person name="Rosovitz M.J."/>
            <person name="Madupu R."/>
            <person name="Tallon L."/>
            <person name="Kim M."/>
            <person name="Jin S."/>
            <person name="Vuong H."/>
            <person name="Stine O.C."/>
            <person name="Ali A."/>
            <person name="Horneman A.J."/>
            <person name="Heidelberg J.F."/>
        </authorList>
    </citation>
    <scope>NUCLEOTIDE SEQUENCE [LARGE SCALE GENOMIC DNA]</scope>
    <source>
        <strain>ATCC 7966 / DSM 30187 / BCRC 13018 / CCUG 14551 / JCM 1027 / KCTC 2358 / NCIMB 9240 / NCTC 8049</strain>
    </source>
</reference>
<keyword id="KW-0378">Hydrolase</keyword>
<keyword id="KW-1185">Reference proteome</keyword>
<feature type="chain" id="PRO_1000012041" description="Bis(5'-nucleosyl)-tetraphosphatase, symmetrical">
    <location>
        <begin position="1"/>
        <end position="273"/>
    </location>
</feature>
<proteinExistence type="inferred from homology"/>
<protein>
    <recommendedName>
        <fullName evidence="1">Bis(5'-nucleosyl)-tetraphosphatase, symmetrical</fullName>
        <ecNumber evidence="1">3.6.1.41</ecNumber>
    </recommendedName>
    <alternativeName>
        <fullName evidence="1">Ap4A hydrolase</fullName>
    </alternativeName>
    <alternativeName>
        <fullName evidence="1">Diadenosine 5',5'''-P1,P4-tetraphosphate pyrophosphohydrolase</fullName>
    </alternativeName>
    <alternativeName>
        <fullName evidence="1">Diadenosine tetraphosphatase</fullName>
    </alternativeName>
</protein>
<comment type="function">
    <text evidence="1">Hydrolyzes diadenosine 5',5'''-P1,P4-tetraphosphate to yield ADP.</text>
</comment>
<comment type="catalytic activity">
    <reaction evidence="1">
        <text>P(1),P(4)-bis(5'-adenosyl) tetraphosphate + H2O = 2 ADP + 2 H(+)</text>
        <dbReference type="Rhea" id="RHEA:24252"/>
        <dbReference type="ChEBI" id="CHEBI:15377"/>
        <dbReference type="ChEBI" id="CHEBI:15378"/>
        <dbReference type="ChEBI" id="CHEBI:58141"/>
        <dbReference type="ChEBI" id="CHEBI:456216"/>
        <dbReference type="EC" id="3.6.1.41"/>
    </reaction>
</comment>
<comment type="similarity">
    <text evidence="1">Belongs to the Ap4A hydrolase family.</text>
</comment>
<dbReference type="EC" id="3.6.1.41" evidence="1"/>
<dbReference type="EMBL" id="CP000462">
    <property type="protein sequence ID" value="ABK39571.1"/>
    <property type="molecule type" value="Genomic_DNA"/>
</dbReference>
<dbReference type="RefSeq" id="WP_011704877.1">
    <property type="nucleotide sequence ID" value="NC_008570.1"/>
</dbReference>
<dbReference type="RefSeq" id="YP_855482.1">
    <property type="nucleotide sequence ID" value="NC_008570.1"/>
</dbReference>
<dbReference type="SMR" id="A0KGT6"/>
<dbReference type="STRING" id="380703.AHA_0940"/>
<dbReference type="EnsemblBacteria" id="ABK39571">
    <property type="protein sequence ID" value="ABK39571"/>
    <property type="gene ID" value="AHA_0940"/>
</dbReference>
<dbReference type="GeneID" id="4486903"/>
<dbReference type="KEGG" id="aha:AHA_0940"/>
<dbReference type="PATRIC" id="fig|380703.7.peg.942"/>
<dbReference type="eggNOG" id="COG0639">
    <property type="taxonomic scope" value="Bacteria"/>
</dbReference>
<dbReference type="HOGENOM" id="CLU_056184_2_0_6"/>
<dbReference type="OrthoDB" id="9807890at2"/>
<dbReference type="Proteomes" id="UP000000756">
    <property type="component" value="Chromosome"/>
</dbReference>
<dbReference type="GO" id="GO:0008803">
    <property type="term" value="F:bis(5'-nucleosyl)-tetraphosphatase (symmetrical) activity"/>
    <property type="evidence" value="ECO:0007669"/>
    <property type="project" value="UniProtKB-UniRule"/>
</dbReference>
<dbReference type="CDD" id="cd07422">
    <property type="entry name" value="MPP_ApaH"/>
    <property type="match status" value="1"/>
</dbReference>
<dbReference type="Gene3D" id="3.60.21.10">
    <property type="match status" value="1"/>
</dbReference>
<dbReference type="HAMAP" id="MF_00199">
    <property type="entry name" value="ApaH"/>
    <property type="match status" value="1"/>
</dbReference>
<dbReference type="InterPro" id="IPR004617">
    <property type="entry name" value="ApaH"/>
</dbReference>
<dbReference type="InterPro" id="IPR004843">
    <property type="entry name" value="Calcineurin-like_PHP_ApaH"/>
</dbReference>
<dbReference type="InterPro" id="IPR029052">
    <property type="entry name" value="Metallo-depent_PP-like"/>
</dbReference>
<dbReference type="NCBIfam" id="TIGR00668">
    <property type="entry name" value="apaH"/>
    <property type="match status" value="1"/>
</dbReference>
<dbReference type="NCBIfam" id="NF001204">
    <property type="entry name" value="PRK00166.1"/>
    <property type="match status" value="1"/>
</dbReference>
<dbReference type="PANTHER" id="PTHR40942">
    <property type="match status" value="1"/>
</dbReference>
<dbReference type="PANTHER" id="PTHR40942:SF4">
    <property type="entry name" value="CYTOCHROME C5"/>
    <property type="match status" value="1"/>
</dbReference>
<dbReference type="Pfam" id="PF00149">
    <property type="entry name" value="Metallophos"/>
    <property type="match status" value="1"/>
</dbReference>
<dbReference type="PIRSF" id="PIRSF000903">
    <property type="entry name" value="B5n-ttraPtase_sm"/>
    <property type="match status" value="1"/>
</dbReference>
<dbReference type="SUPFAM" id="SSF56300">
    <property type="entry name" value="Metallo-dependent phosphatases"/>
    <property type="match status" value="1"/>
</dbReference>
<accession>A0KGT6</accession>
<sequence length="273" mass="31206">MANCFVGDIQGCYDDLRRLLDLAEFDPANDVLWLCGDLVARGPDSLNTLRFVKGLGNRAVTVLGNHDLHLLAVADGVAPLKKKDKLQELMEAPDRDELLEWLRHRPLLAEHPDLPIMMVHAGISPAWDARTARNCAREVESLLRGDQYQWLLHNMYGDQPDGWQDDLVGIERYRYIINTFTRMRFCYFDGRLDFKCKKGPKESTPGLRPWFEQREHHVDDPILVFGHWAALMGNTGKQDIKALDTGCVWGNSLTLWRYEDDALIATPCPTYAK</sequence>
<gene>
    <name evidence="1" type="primary">apaH</name>
    <name type="ordered locus">AHA_0940</name>
</gene>